<accession>B5EQH6</accession>
<sequence length="344" mass="36666">MIRAGIVGGTGYTGVELLRLLLPHPEVELVAITSRAEAGQRVDEHFPNLRGHCNLSYTAPDPAILGTLDVVFFATPHGVAMDSAPKLLAEGVRIIDLGADFRLPDAEVFAQWYGMAHRAPEVLGEACYGLPEYYRTKISEARLIANPGCYPTAVILGLAPLLAEGLLQEDTLIADCKSGVSGAGRSAKVGLILPETADSVSAYGVGGHRHRPEIEAVLSDISGTPLELQFTPHLMPMIRGIHATLYGRLAQPMSDAALQDLFATRYASEPFVDVLPFGSHPATRSVRGANMCLIAVHQPRPGQVVVLSVIDNLVKGAAGQAIQNMNRLFSLAEDAGLMQIALLP</sequence>
<feature type="chain" id="PRO_1000096711" description="N-acetyl-gamma-glutamyl-phosphate reductase">
    <location>
        <begin position="1"/>
        <end position="344"/>
    </location>
</feature>
<feature type="active site" evidence="1">
    <location>
        <position position="149"/>
    </location>
</feature>
<reference key="1">
    <citation type="submission" date="2008-08" db="EMBL/GenBank/DDBJ databases">
        <title>Complete sequence of Acidithiobacillus ferrooxidans ATCC 53993.</title>
        <authorList>
            <person name="Lucas S."/>
            <person name="Copeland A."/>
            <person name="Lapidus A."/>
            <person name="Glavina del Rio T."/>
            <person name="Dalin E."/>
            <person name="Tice H."/>
            <person name="Bruce D."/>
            <person name="Goodwin L."/>
            <person name="Pitluck S."/>
            <person name="Sims D."/>
            <person name="Brettin T."/>
            <person name="Detter J.C."/>
            <person name="Han C."/>
            <person name="Kuske C.R."/>
            <person name="Larimer F."/>
            <person name="Land M."/>
            <person name="Hauser L."/>
            <person name="Kyrpides N."/>
            <person name="Lykidis A."/>
            <person name="Borole A.P."/>
        </authorList>
    </citation>
    <scope>NUCLEOTIDE SEQUENCE [LARGE SCALE GENOMIC DNA]</scope>
    <source>
        <strain>ATCC 53993 / BNL-5-31</strain>
    </source>
</reference>
<evidence type="ECO:0000255" key="1">
    <source>
        <dbReference type="HAMAP-Rule" id="MF_00150"/>
    </source>
</evidence>
<keyword id="KW-0028">Amino-acid biosynthesis</keyword>
<keyword id="KW-0055">Arginine biosynthesis</keyword>
<keyword id="KW-0963">Cytoplasm</keyword>
<keyword id="KW-0521">NADP</keyword>
<keyword id="KW-0560">Oxidoreductase</keyword>
<comment type="function">
    <text evidence="1">Catalyzes the NADPH-dependent reduction of N-acetyl-5-glutamyl phosphate to yield N-acetyl-L-glutamate 5-semialdehyde.</text>
</comment>
<comment type="catalytic activity">
    <reaction evidence="1">
        <text>N-acetyl-L-glutamate 5-semialdehyde + phosphate + NADP(+) = N-acetyl-L-glutamyl 5-phosphate + NADPH + H(+)</text>
        <dbReference type="Rhea" id="RHEA:21588"/>
        <dbReference type="ChEBI" id="CHEBI:15378"/>
        <dbReference type="ChEBI" id="CHEBI:29123"/>
        <dbReference type="ChEBI" id="CHEBI:43474"/>
        <dbReference type="ChEBI" id="CHEBI:57783"/>
        <dbReference type="ChEBI" id="CHEBI:57936"/>
        <dbReference type="ChEBI" id="CHEBI:58349"/>
        <dbReference type="EC" id="1.2.1.38"/>
    </reaction>
</comment>
<comment type="pathway">
    <text evidence="1">Amino-acid biosynthesis; L-arginine biosynthesis; N(2)-acetyl-L-ornithine from L-glutamate: step 3/4.</text>
</comment>
<comment type="subcellular location">
    <subcellularLocation>
        <location evidence="1">Cytoplasm</location>
    </subcellularLocation>
</comment>
<comment type="similarity">
    <text evidence="1">Belongs to the NAGSA dehydrogenase family. Type 1 subfamily.</text>
</comment>
<dbReference type="EC" id="1.2.1.38" evidence="1"/>
<dbReference type="EMBL" id="CP001132">
    <property type="protein sequence ID" value="ACH84873.1"/>
    <property type="molecule type" value="Genomic_DNA"/>
</dbReference>
<dbReference type="RefSeq" id="WP_012537583.1">
    <property type="nucleotide sequence ID" value="NC_011206.1"/>
</dbReference>
<dbReference type="SMR" id="B5EQH6"/>
<dbReference type="GeneID" id="65282072"/>
<dbReference type="KEGG" id="afe:Lferr_2679"/>
<dbReference type="eggNOG" id="COG0002">
    <property type="taxonomic scope" value="Bacteria"/>
</dbReference>
<dbReference type="HOGENOM" id="CLU_006384_0_1_6"/>
<dbReference type="UniPathway" id="UPA00068">
    <property type="reaction ID" value="UER00108"/>
</dbReference>
<dbReference type="GO" id="GO:0005737">
    <property type="term" value="C:cytoplasm"/>
    <property type="evidence" value="ECO:0007669"/>
    <property type="project" value="UniProtKB-SubCell"/>
</dbReference>
<dbReference type="GO" id="GO:0003942">
    <property type="term" value="F:N-acetyl-gamma-glutamyl-phosphate reductase activity"/>
    <property type="evidence" value="ECO:0007669"/>
    <property type="project" value="UniProtKB-UniRule"/>
</dbReference>
<dbReference type="GO" id="GO:0051287">
    <property type="term" value="F:NAD binding"/>
    <property type="evidence" value="ECO:0007669"/>
    <property type="project" value="InterPro"/>
</dbReference>
<dbReference type="GO" id="GO:0070401">
    <property type="term" value="F:NADP+ binding"/>
    <property type="evidence" value="ECO:0007669"/>
    <property type="project" value="InterPro"/>
</dbReference>
<dbReference type="GO" id="GO:0006526">
    <property type="term" value="P:L-arginine biosynthetic process"/>
    <property type="evidence" value="ECO:0007669"/>
    <property type="project" value="UniProtKB-UniRule"/>
</dbReference>
<dbReference type="CDD" id="cd23934">
    <property type="entry name" value="AGPR_1_C"/>
    <property type="match status" value="1"/>
</dbReference>
<dbReference type="CDD" id="cd17895">
    <property type="entry name" value="AGPR_1_N"/>
    <property type="match status" value="1"/>
</dbReference>
<dbReference type="FunFam" id="3.30.360.10:FF:000014">
    <property type="entry name" value="N-acetyl-gamma-glutamyl-phosphate reductase"/>
    <property type="match status" value="1"/>
</dbReference>
<dbReference type="Gene3D" id="3.30.360.10">
    <property type="entry name" value="Dihydrodipicolinate Reductase, domain 2"/>
    <property type="match status" value="1"/>
</dbReference>
<dbReference type="Gene3D" id="3.40.50.720">
    <property type="entry name" value="NAD(P)-binding Rossmann-like Domain"/>
    <property type="match status" value="1"/>
</dbReference>
<dbReference type="HAMAP" id="MF_00150">
    <property type="entry name" value="ArgC_type1"/>
    <property type="match status" value="1"/>
</dbReference>
<dbReference type="InterPro" id="IPR023013">
    <property type="entry name" value="AGPR_AS"/>
</dbReference>
<dbReference type="InterPro" id="IPR000706">
    <property type="entry name" value="AGPR_type-1"/>
</dbReference>
<dbReference type="InterPro" id="IPR036291">
    <property type="entry name" value="NAD(P)-bd_dom_sf"/>
</dbReference>
<dbReference type="InterPro" id="IPR050085">
    <property type="entry name" value="NAGSA_dehydrogenase"/>
</dbReference>
<dbReference type="InterPro" id="IPR000534">
    <property type="entry name" value="Semialdehyde_DH_NAD-bd"/>
</dbReference>
<dbReference type="NCBIfam" id="TIGR01850">
    <property type="entry name" value="argC"/>
    <property type="match status" value="1"/>
</dbReference>
<dbReference type="PANTHER" id="PTHR32338:SF10">
    <property type="entry name" value="N-ACETYL-GAMMA-GLUTAMYL-PHOSPHATE REDUCTASE, CHLOROPLASTIC-RELATED"/>
    <property type="match status" value="1"/>
</dbReference>
<dbReference type="PANTHER" id="PTHR32338">
    <property type="entry name" value="N-ACETYL-GAMMA-GLUTAMYL-PHOSPHATE REDUCTASE, CHLOROPLASTIC-RELATED-RELATED"/>
    <property type="match status" value="1"/>
</dbReference>
<dbReference type="Pfam" id="PF01118">
    <property type="entry name" value="Semialdhyde_dh"/>
    <property type="match status" value="1"/>
</dbReference>
<dbReference type="Pfam" id="PF22698">
    <property type="entry name" value="Semialdhyde_dhC_1"/>
    <property type="match status" value="1"/>
</dbReference>
<dbReference type="SMART" id="SM00859">
    <property type="entry name" value="Semialdhyde_dh"/>
    <property type="match status" value="1"/>
</dbReference>
<dbReference type="SUPFAM" id="SSF55347">
    <property type="entry name" value="Glyceraldehyde-3-phosphate dehydrogenase-like, C-terminal domain"/>
    <property type="match status" value="1"/>
</dbReference>
<dbReference type="SUPFAM" id="SSF51735">
    <property type="entry name" value="NAD(P)-binding Rossmann-fold domains"/>
    <property type="match status" value="1"/>
</dbReference>
<dbReference type="PROSITE" id="PS01224">
    <property type="entry name" value="ARGC"/>
    <property type="match status" value="1"/>
</dbReference>
<gene>
    <name evidence="1" type="primary">argC</name>
    <name type="ordered locus">Lferr_2679</name>
</gene>
<protein>
    <recommendedName>
        <fullName evidence="1">N-acetyl-gamma-glutamyl-phosphate reductase</fullName>
        <shortName evidence="1">AGPR</shortName>
        <ecNumber evidence="1">1.2.1.38</ecNumber>
    </recommendedName>
    <alternativeName>
        <fullName evidence="1">N-acetyl-glutamate semialdehyde dehydrogenase</fullName>
        <shortName evidence="1">NAGSA dehydrogenase</shortName>
    </alternativeName>
</protein>
<organism>
    <name type="scientific">Acidithiobacillus ferrooxidans (strain ATCC 53993 / BNL-5-31)</name>
    <name type="common">Leptospirillum ferrooxidans (ATCC 53993)</name>
    <dbReference type="NCBI Taxonomy" id="380394"/>
    <lineage>
        <taxon>Bacteria</taxon>
        <taxon>Pseudomonadati</taxon>
        <taxon>Pseudomonadota</taxon>
        <taxon>Acidithiobacillia</taxon>
        <taxon>Acidithiobacillales</taxon>
        <taxon>Acidithiobacillaceae</taxon>
        <taxon>Acidithiobacillus</taxon>
    </lineage>
</organism>
<proteinExistence type="inferred from homology"/>
<name>ARGC_ACIF5</name>